<reference key="1">
    <citation type="journal article" date="2005" name="Biochim. Biophys. Acta">
        <title>A nhaD Na+/H+ antiporter and a pcd homologues are among the Rhodothermus marinus complex I genes.</title>
        <authorList>
            <person name="Melo A.M.P."/>
            <person name="Lobo S.A.L."/>
            <person name="Sousa F.L."/>
            <person name="Fernandes A.S."/>
            <person name="Pereira M.M."/>
            <person name="Hreggvidsson G.O."/>
            <person name="Kristjansson J.K."/>
            <person name="Saraiva L.M."/>
            <person name="Teixeira M."/>
        </authorList>
    </citation>
    <scope>NUCLEOTIDE SEQUENCE [GENOMIC DNA]</scope>
    <source>
        <strain>PRQ 62B</strain>
    </source>
</reference>
<organism>
    <name type="scientific">Rhodothermus marinus</name>
    <name type="common">Rhodothermus obamensis</name>
    <dbReference type="NCBI Taxonomy" id="29549"/>
    <lineage>
        <taxon>Bacteria</taxon>
        <taxon>Pseudomonadati</taxon>
        <taxon>Rhodothermota</taxon>
        <taxon>Rhodothermia</taxon>
        <taxon>Rhodothermales</taxon>
        <taxon>Rhodothermaceae</taxon>
        <taxon>Rhodothermus</taxon>
    </lineage>
</organism>
<accession>Q4QSC5</accession>
<evidence type="ECO:0000250" key="1"/>
<evidence type="ECO:0000305" key="2"/>
<proteinExistence type="inferred from homology"/>
<comment type="function">
    <text evidence="1">NDH-1 shuttles electrons from NADH, via FMN and iron-sulfur (Fe-S) centers, to quinones in the respiratory chain. The immediate electron acceptor for the enzyme in this species is believed to be menaquinone. Couples the redox reaction to proton translocation (for every two electrons transferred, four hydrogen ions are translocated across the cytoplasmic membrane), and thus conserves the redox energy in a proton gradient.</text>
</comment>
<comment type="catalytic activity">
    <reaction>
        <text>a quinone + NADH + 5 H(+)(in) = a quinol + NAD(+) + 4 H(+)(out)</text>
        <dbReference type="Rhea" id="RHEA:57888"/>
        <dbReference type="ChEBI" id="CHEBI:15378"/>
        <dbReference type="ChEBI" id="CHEBI:24646"/>
        <dbReference type="ChEBI" id="CHEBI:57540"/>
        <dbReference type="ChEBI" id="CHEBI:57945"/>
        <dbReference type="ChEBI" id="CHEBI:132124"/>
    </reaction>
</comment>
<comment type="cofactor">
    <cofactor evidence="1">
        <name>[4Fe-4S] cluster</name>
        <dbReference type="ChEBI" id="CHEBI:49883"/>
    </cofactor>
    <text evidence="1">Binds 2 [4Fe-4S] clusters per subunit.</text>
</comment>
<comment type="subunit">
    <text evidence="1">NDH-1 is composed of 14 different subunits. Subunits Nqo7-14 constitute the membrane sector of the complex (By similarity).</text>
</comment>
<comment type="subcellular location">
    <subcellularLocation>
        <location evidence="2">Cell inner membrane</location>
        <topology evidence="2">Peripheral membrane protein</topology>
    </subcellularLocation>
</comment>
<comment type="similarity">
    <text evidence="2">Belongs to the complex I 23 kDa subunit family.</text>
</comment>
<name>NQO9_RHOMR</name>
<sequence>MPGKPVNLASPNERKLNFWERLYLPAVVQGLAYTWRKMRSPRYTFQYPDELWYPPDSYRGRPVLVEENGRPRCVACGLCARACPPLAISMQAKEVDDVKEREPAWFEINMLRCIYCGYCEEVCPEEAIVMSKEYDLTFQSRDEAIFGLEKLLVPAERLKDRLEWLDRYKDPQYGQHWEFRKENNLHSLKDRPFLKWLLEEEGMEELKSTHLRPEEPVAAERSWGGVRAEG</sequence>
<keyword id="KW-0004">4Fe-4S</keyword>
<keyword id="KW-0997">Cell inner membrane</keyword>
<keyword id="KW-1003">Cell membrane</keyword>
<keyword id="KW-0408">Iron</keyword>
<keyword id="KW-0411">Iron-sulfur</keyword>
<keyword id="KW-0472">Membrane</keyword>
<keyword id="KW-0479">Metal-binding</keyword>
<keyword id="KW-0520">NAD</keyword>
<keyword id="KW-0874">Quinone</keyword>
<keyword id="KW-0677">Repeat</keyword>
<keyword id="KW-1278">Translocase</keyword>
<gene>
    <name type="primary">nqo9</name>
</gene>
<dbReference type="EC" id="7.1.1.-"/>
<dbReference type="EMBL" id="AY972099">
    <property type="protein sequence ID" value="AAY42993.1"/>
    <property type="molecule type" value="Genomic_DNA"/>
</dbReference>
<dbReference type="SMR" id="Q4QSC5"/>
<dbReference type="GO" id="GO:0005886">
    <property type="term" value="C:plasma membrane"/>
    <property type="evidence" value="ECO:0007669"/>
    <property type="project" value="UniProtKB-SubCell"/>
</dbReference>
<dbReference type="GO" id="GO:0051539">
    <property type="term" value="F:4 iron, 4 sulfur cluster binding"/>
    <property type="evidence" value="ECO:0007669"/>
    <property type="project" value="UniProtKB-KW"/>
</dbReference>
<dbReference type="GO" id="GO:0005506">
    <property type="term" value="F:iron ion binding"/>
    <property type="evidence" value="ECO:0007669"/>
    <property type="project" value="UniProtKB-UniRule"/>
</dbReference>
<dbReference type="GO" id="GO:0050136">
    <property type="term" value="F:NADH:ubiquinone reductase (non-electrogenic) activity"/>
    <property type="evidence" value="ECO:0007669"/>
    <property type="project" value="UniProtKB-UniRule"/>
</dbReference>
<dbReference type="GO" id="GO:0048038">
    <property type="term" value="F:quinone binding"/>
    <property type="evidence" value="ECO:0007669"/>
    <property type="project" value="UniProtKB-KW"/>
</dbReference>
<dbReference type="GO" id="GO:0009060">
    <property type="term" value="P:aerobic respiration"/>
    <property type="evidence" value="ECO:0007669"/>
    <property type="project" value="TreeGrafter"/>
</dbReference>
<dbReference type="Gene3D" id="3.30.70.3270">
    <property type="match status" value="1"/>
</dbReference>
<dbReference type="HAMAP" id="MF_01351">
    <property type="entry name" value="NDH1_NuoI"/>
    <property type="match status" value="1"/>
</dbReference>
<dbReference type="InterPro" id="IPR017896">
    <property type="entry name" value="4Fe4S_Fe-S-bd"/>
</dbReference>
<dbReference type="InterPro" id="IPR017900">
    <property type="entry name" value="4Fe4S_Fe_S_CS"/>
</dbReference>
<dbReference type="InterPro" id="IPR010226">
    <property type="entry name" value="NADH_quinone_OxRdtase_chainI"/>
</dbReference>
<dbReference type="NCBIfam" id="TIGR01971">
    <property type="entry name" value="NuoI"/>
    <property type="match status" value="1"/>
</dbReference>
<dbReference type="PANTHER" id="PTHR10849:SF35">
    <property type="entry name" value="FORMATE HYDROGENLYASE SUBUNIT 6-RELATED"/>
    <property type="match status" value="1"/>
</dbReference>
<dbReference type="PANTHER" id="PTHR10849">
    <property type="entry name" value="NADH DEHYDROGENASE UBIQUINONE IRON-SULFUR PROTEIN 8, MITOCHONDRIAL"/>
    <property type="match status" value="1"/>
</dbReference>
<dbReference type="Pfam" id="PF12838">
    <property type="entry name" value="Fer4_7"/>
    <property type="match status" value="1"/>
</dbReference>
<dbReference type="SUPFAM" id="SSF54862">
    <property type="entry name" value="4Fe-4S ferredoxins"/>
    <property type="match status" value="1"/>
</dbReference>
<dbReference type="PROSITE" id="PS00198">
    <property type="entry name" value="4FE4S_FER_1"/>
    <property type="match status" value="2"/>
</dbReference>
<dbReference type="PROSITE" id="PS51379">
    <property type="entry name" value="4FE4S_FER_2"/>
    <property type="match status" value="2"/>
</dbReference>
<feature type="chain" id="PRO_0000245739" description="NADH-quinone oxidoreductase subunit 9">
    <location>
        <begin position="1"/>
        <end position="230"/>
    </location>
</feature>
<feature type="domain" description="4Fe-4S ferredoxin-type 1">
    <location>
        <begin position="60"/>
        <end position="93"/>
    </location>
</feature>
<feature type="domain" description="4Fe-4S ferredoxin-type 2">
    <location>
        <begin position="104"/>
        <end position="133"/>
    </location>
</feature>
<feature type="binding site" evidence="1">
    <location>
        <position position="73"/>
    </location>
    <ligand>
        <name>[4Fe-4S] cluster</name>
        <dbReference type="ChEBI" id="CHEBI:49883"/>
        <label>1</label>
    </ligand>
</feature>
<feature type="binding site" evidence="1">
    <location>
        <position position="76"/>
    </location>
    <ligand>
        <name>[4Fe-4S] cluster</name>
        <dbReference type="ChEBI" id="CHEBI:49883"/>
        <label>1</label>
    </ligand>
</feature>
<feature type="binding site" evidence="1">
    <location>
        <position position="79"/>
    </location>
    <ligand>
        <name>[4Fe-4S] cluster</name>
        <dbReference type="ChEBI" id="CHEBI:49883"/>
        <label>1</label>
    </ligand>
</feature>
<feature type="binding site" evidence="1">
    <location>
        <position position="83"/>
    </location>
    <ligand>
        <name>[4Fe-4S] cluster</name>
        <dbReference type="ChEBI" id="CHEBI:49883"/>
        <label>2</label>
    </ligand>
</feature>
<feature type="binding site" evidence="1">
    <location>
        <position position="113"/>
    </location>
    <ligand>
        <name>[4Fe-4S] cluster</name>
        <dbReference type="ChEBI" id="CHEBI:49883"/>
        <label>2</label>
    </ligand>
</feature>
<feature type="binding site" evidence="1">
    <location>
        <position position="116"/>
    </location>
    <ligand>
        <name>[4Fe-4S] cluster</name>
        <dbReference type="ChEBI" id="CHEBI:49883"/>
        <label>2</label>
    </ligand>
</feature>
<feature type="binding site" evidence="1">
    <location>
        <position position="119"/>
    </location>
    <ligand>
        <name>[4Fe-4S] cluster</name>
        <dbReference type="ChEBI" id="CHEBI:49883"/>
        <label>2</label>
    </ligand>
</feature>
<feature type="binding site" evidence="1">
    <location>
        <position position="123"/>
    </location>
    <ligand>
        <name>[4Fe-4S] cluster</name>
        <dbReference type="ChEBI" id="CHEBI:49883"/>
        <label>1</label>
    </ligand>
</feature>
<protein>
    <recommendedName>
        <fullName>NADH-quinone oxidoreductase subunit 9</fullName>
        <ecNumber>7.1.1.-</ecNumber>
    </recommendedName>
    <alternativeName>
        <fullName>NADH dehydrogenase I subunit 9</fullName>
    </alternativeName>
    <alternativeName>
        <fullName>NDH-1 subunit 9</fullName>
    </alternativeName>
</protein>